<reference key="1">
    <citation type="journal article" date="1998" name="Nature">
        <title>Deciphering the biology of Mycobacterium tuberculosis from the complete genome sequence.</title>
        <authorList>
            <person name="Cole S.T."/>
            <person name="Brosch R."/>
            <person name="Parkhill J."/>
            <person name="Garnier T."/>
            <person name="Churcher C.M."/>
            <person name="Harris D.E."/>
            <person name="Gordon S.V."/>
            <person name="Eiglmeier K."/>
            <person name="Gas S."/>
            <person name="Barry C.E. III"/>
            <person name="Tekaia F."/>
            <person name="Badcock K."/>
            <person name="Basham D."/>
            <person name="Brown D."/>
            <person name="Chillingworth T."/>
            <person name="Connor R."/>
            <person name="Davies R.M."/>
            <person name="Devlin K."/>
            <person name="Feltwell T."/>
            <person name="Gentles S."/>
            <person name="Hamlin N."/>
            <person name="Holroyd S."/>
            <person name="Hornsby T."/>
            <person name="Jagels K."/>
            <person name="Krogh A."/>
            <person name="McLean J."/>
            <person name="Moule S."/>
            <person name="Murphy L.D."/>
            <person name="Oliver S."/>
            <person name="Osborne J."/>
            <person name="Quail M.A."/>
            <person name="Rajandream M.A."/>
            <person name="Rogers J."/>
            <person name="Rutter S."/>
            <person name="Seeger K."/>
            <person name="Skelton S."/>
            <person name="Squares S."/>
            <person name="Squares R."/>
            <person name="Sulston J.E."/>
            <person name="Taylor K."/>
            <person name="Whitehead S."/>
            <person name="Barrell B.G."/>
        </authorList>
    </citation>
    <scope>NUCLEOTIDE SEQUENCE [LARGE SCALE GENOMIC DNA]</scope>
    <source>
        <strain>ATCC 25618 / H37Rv</strain>
    </source>
</reference>
<reference key="2">
    <citation type="journal article" date="2008" name="BMC Syst. Biol.">
        <title>targetTB: a target identification pipeline for Mycobacterium tuberculosis through an interactome, reactome and genome-scale structural analysis.</title>
        <authorList>
            <person name="Raman K."/>
            <person name="Yeturu K."/>
            <person name="Chandra N."/>
        </authorList>
    </citation>
    <scope>IDENTIFICATION AS A DRUG TARGET [LARGE SCALE ANALYSIS]</scope>
</reference>
<reference key="3">
    <citation type="journal article" date="2011" name="Mol. Cell. Proteomics">
        <title>Proteogenomic analysis of Mycobacterium tuberculosis by high resolution mass spectrometry.</title>
        <authorList>
            <person name="Kelkar D.S."/>
            <person name="Kumar D."/>
            <person name="Kumar P."/>
            <person name="Balakrishnan L."/>
            <person name="Muthusamy B."/>
            <person name="Yadav A.K."/>
            <person name="Shrivastava P."/>
            <person name="Marimuthu A."/>
            <person name="Anand S."/>
            <person name="Sundaram H."/>
            <person name="Kingsbury R."/>
            <person name="Harsha H.C."/>
            <person name="Nair B."/>
            <person name="Prasad T.S."/>
            <person name="Chauhan D.S."/>
            <person name="Katoch K."/>
            <person name="Katoch V.M."/>
            <person name="Kumar P."/>
            <person name="Chaerkady R."/>
            <person name="Ramachandran S."/>
            <person name="Dash D."/>
            <person name="Pandey A."/>
        </authorList>
    </citation>
    <scope>IDENTIFICATION BY MASS SPECTROMETRY [LARGE SCALE ANALYSIS]</scope>
    <source>
        <strain>ATCC 25618 / H37Rv</strain>
    </source>
</reference>
<reference key="4">
    <citation type="journal article" date="2009" name="Mol. Microbiol.">
        <title>Genome-wide regulon and crystal structure of BlaI (Rv1846c) from Mycobacterium tuberculosis.</title>
        <authorList>
            <person name="Sala C."/>
            <person name="Haouz A."/>
            <person name="Saul F.A."/>
            <person name="Miras I."/>
            <person name="Rosenkrands I."/>
            <person name="Alzari P.M."/>
            <person name="Cole S.T."/>
        </authorList>
    </citation>
    <scope>X-RAY CRYSTALLOGRAPHY (1.8 ANGSTROMS)</scope>
    <scope>FUNCTION</scope>
    <scope>SUBUNIT</scope>
    <scope>INDUCTION</scope>
    <scope>DNA-BINDING</scope>
    <source>
        <strain>ATCC 25618 / H37Rv</strain>
    </source>
</reference>
<keyword id="KW-0002">3D-structure</keyword>
<keyword id="KW-0046">Antibiotic resistance</keyword>
<keyword id="KW-0963">Cytoplasm</keyword>
<keyword id="KW-0238">DNA-binding</keyword>
<keyword id="KW-1185">Reference proteome</keyword>
<keyword id="KW-0678">Repressor</keyword>
<keyword id="KW-0804">Transcription</keyword>
<keyword id="KW-0805">Transcription regulation</keyword>
<feature type="chain" id="PRO_0000371419" description="Transcriptional regulator BlaI">
    <location>
        <begin position="1"/>
        <end position="138"/>
    </location>
</feature>
<feature type="DNA-binding region" description="H-T-H motif">
    <location>
        <begin position="6"/>
        <end position="71"/>
    </location>
</feature>
<feature type="region of interest" description="Important for dimerization" evidence="1">
    <location>
        <begin position="74"/>
        <end position="138"/>
    </location>
</feature>
<feature type="site" description="Cleavage" evidence="2">
    <location>
        <begin position="102"/>
        <end position="103"/>
    </location>
</feature>
<feature type="helix" evidence="5">
    <location>
        <begin position="4"/>
        <end position="6"/>
    </location>
</feature>
<feature type="helix" evidence="5">
    <location>
        <begin position="9"/>
        <end position="19"/>
    </location>
</feature>
<feature type="helix" evidence="5">
    <location>
        <begin position="27"/>
        <end position="34"/>
    </location>
</feature>
<feature type="turn" evidence="5">
    <location>
        <begin position="35"/>
        <end position="37"/>
    </location>
</feature>
<feature type="helix" evidence="5">
    <location>
        <begin position="42"/>
        <end position="54"/>
    </location>
</feature>
<feature type="strand" evidence="5">
    <location>
        <begin position="57"/>
        <end position="61"/>
    </location>
</feature>
<feature type="strand" evidence="5">
    <location>
        <begin position="68"/>
        <end position="73"/>
    </location>
</feature>
<feature type="helix" evidence="5">
    <location>
        <begin position="75"/>
        <end position="87"/>
    </location>
</feature>
<feature type="strand" evidence="5">
    <location>
        <begin position="90"/>
        <end position="92"/>
    </location>
</feature>
<feature type="helix" evidence="5">
    <location>
        <begin position="93"/>
        <end position="106"/>
    </location>
</feature>
<feature type="helix" evidence="5">
    <location>
        <begin position="109"/>
        <end position="123"/>
    </location>
</feature>
<gene>
    <name type="primary">blaI</name>
    <name type="ordered locus">Rv1846c</name>
</gene>
<protein>
    <recommendedName>
        <fullName>Transcriptional regulator BlaI</fullName>
    </recommendedName>
</protein>
<comment type="function">
    <text evidence="3">Transcription regulator that binds to an inverted DNA repeat with the consensus sequence 5'-TAC[GT]AC-NNNNN-GT[AC]GTA-3' and regulates genes involved in antibiotic transport, detoxification and cell wall function. Also regulates its own transcription. Binds DNA as a dimer.</text>
</comment>
<comment type="subunit">
    <text evidence="3">Homodimer.</text>
</comment>
<comment type="subcellular location">
    <subcellularLocation>
        <location evidence="4">Cytoplasm</location>
    </subcellularLocation>
</comment>
<comment type="induction">
    <text evidence="3">Autoregulated. Up-regulated by amoxicillin.</text>
</comment>
<comment type="PTM">
    <text evidence="1">Upon exposure to beta-lactams, proteolytic cleavage at a single site may impair dimerization and abolish repressor activity.</text>
</comment>
<comment type="miscellaneous">
    <text>Was identified as a high-confidence drug target.</text>
</comment>
<comment type="similarity">
    <text evidence="4">Belongs to the BlaI transcriptional regulatory family.</text>
</comment>
<organism>
    <name type="scientific">Mycobacterium tuberculosis (strain ATCC 25618 / H37Rv)</name>
    <dbReference type="NCBI Taxonomy" id="83332"/>
    <lineage>
        <taxon>Bacteria</taxon>
        <taxon>Bacillati</taxon>
        <taxon>Actinomycetota</taxon>
        <taxon>Actinomycetes</taxon>
        <taxon>Mycobacteriales</taxon>
        <taxon>Mycobacteriaceae</taxon>
        <taxon>Mycobacterium</taxon>
        <taxon>Mycobacterium tuberculosis complex</taxon>
    </lineage>
</organism>
<name>BLAI_MYCTU</name>
<dbReference type="EMBL" id="AL123456">
    <property type="protein sequence ID" value="CCP44612.1"/>
    <property type="molecule type" value="Genomic_DNA"/>
</dbReference>
<dbReference type="PIR" id="F70664">
    <property type="entry name" value="F70664"/>
</dbReference>
<dbReference type="RefSeq" id="NP_216362.1">
    <property type="nucleotide sequence ID" value="NC_000962.3"/>
</dbReference>
<dbReference type="RefSeq" id="WP_003409301.1">
    <property type="nucleotide sequence ID" value="NZ_NVQJ01000013.1"/>
</dbReference>
<dbReference type="PDB" id="2G9W">
    <property type="method" value="X-ray"/>
    <property type="resolution" value="1.80 A"/>
    <property type="chains" value="A/B=1-138"/>
</dbReference>
<dbReference type="PDBsum" id="2G9W"/>
<dbReference type="SMR" id="P9WMJ5"/>
<dbReference type="STRING" id="83332.Rv1846c"/>
<dbReference type="PaxDb" id="83332-Rv1846c"/>
<dbReference type="GeneID" id="45425819"/>
<dbReference type="GeneID" id="885747"/>
<dbReference type="KEGG" id="mtu:Rv1846c"/>
<dbReference type="KEGG" id="mtv:RVBD_1846c"/>
<dbReference type="TubercuList" id="Rv1846c"/>
<dbReference type="eggNOG" id="COG3682">
    <property type="taxonomic scope" value="Bacteria"/>
</dbReference>
<dbReference type="InParanoid" id="P9WMJ5"/>
<dbReference type="OrthoDB" id="9813987at2"/>
<dbReference type="PhylomeDB" id="P9WMJ5"/>
<dbReference type="EvolutionaryTrace" id="P9WMJ5"/>
<dbReference type="Proteomes" id="UP000001584">
    <property type="component" value="Chromosome"/>
</dbReference>
<dbReference type="GO" id="GO:0005737">
    <property type="term" value="C:cytoplasm"/>
    <property type="evidence" value="ECO:0007669"/>
    <property type="project" value="UniProtKB-SubCell"/>
</dbReference>
<dbReference type="GO" id="GO:0003677">
    <property type="term" value="F:DNA binding"/>
    <property type="evidence" value="ECO:0000314"/>
    <property type="project" value="MTBBASE"/>
</dbReference>
<dbReference type="GO" id="GO:0045892">
    <property type="term" value="P:negative regulation of DNA-templated transcription"/>
    <property type="evidence" value="ECO:0007669"/>
    <property type="project" value="InterPro"/>
</dbReference>
<dbReference type="GO" id="GO:0006355">
    <property type="term" value="P:regulation of DNA-templated transcription"/>
    <property type="evidence" value="ECO:0000314"/>
    <property type="project" value="MTBBASE"/>
</dbReference>
<dbReference type="GO" id="GO:0046677">
    <property type="term" value="P:response to antibiotic"/>
    <property type="evidence" value="ECO:0000270"/>
    <property type="project" value="MTBBASE"/>
</dbReference>
<dbReference type="FunFam" id="1.10.10.10:FF:000348">
    <property type="entry name" value="Transcriptional regulator BlaI"/>
    <property type="match status" value="1"/>
</dbReference>
<dbReference type="Gene3D" id="6.10.140.850">
    <property type="match status" value="1"/>
</dbReference>
<dbReference type="Gene3D" id="1.10.10.10">
    <property type="entry name" value="Winged helix-like DNA-binding domain superfamily/Winged helix DNA-binding domain"/>
    <property type="match status" value="1"/>
</dbReference>
<dbReference type="InterPro" id="IPR005650">
    <property type="entry name" value="BlaI_family"/>
</dbReference>
<dbReference type="InterPro" id="IPR036388">
    <property type="entry name" value="WH-like_DNA-bd_sf"/>
</dbReference>
<dbReference type="InterPro" id="IPR036390">
    <property type="entry name" value="WH_DNA-bd_sf"/>
</dbReference>
<dbReference type="Pfam" id="PF03965">
    <property type="entry name" value="Penicillinase_R"/>
    <property type="match status" value="1"/>
</dbReference>
<dbReference type="PIRSF" id="PIRSF019455">
    <property type="entry name" value="CopR_AtkY"/>
    <property type="match status" value="1"/>
</dbReference>
<dbReference type="SUPFAM" id="SSF46785">
    <property type="entry name" value="Winged helix' DNA-binding domain"/>
    <property type="match status" value="1"/>
</dbReference>
<proteinExistence type="evidence at protein level"/>
<sequence length="138" mass="15211">MAKLTRLGDLERAVMDHLWSRTEPQTVRQVHEALSARRDLAYTTVMTVLQRLAKKNLVLQIRDDRAHRYAPVHGRDELVAGLMVDALAQAEDSGSRQAALVHFVERVGADEADALRRALAELEAGHGNRPPAGAATET</sequence>
<accession>P9WMJ5</accession>
<accession>L0T7V6</accession>
<accession>P95163</accession>
<accession>Q7D7W9</accession>
<evidence type="ECO:0000250" key="1"/>
<evidence type="ECO:0000255" key="2"/>
<evidence type="ECO:0000269" key="3">
    <source>
    </source>
</evidence>
<evidence type="ECO:0000305" key="4"/>
<evidence type="ECO:0007829" key="5">
    <source>
        <dbReference type="PDB" id="2G9W"/>
    </source>
</evidence>